<evidence type="ECO:0000250" key="1"/>
<evidence type="ECO:0000250" key="2">
    <source>
        <dbReference type="UniProtKB" id="Q67A25"/>
    </source>
</evidence>
<evidence type="ECO:0000255" key="3">
    <source>
        <dbReference type="PROSITE-ProRule" id="PRU00805"/>
    </source>
</evidence>
<evidence type="ECO:0000269" key="4">
    <source>
    </source>
</evidence>
<evidence type="ECO:0000305" key="5"/>
<reference key="1">
    <citation type="journal article" date="2007" name="J. Biol. Chem.">
        <title>Functional analysis of norcoclaurine synthase in Coptis japonica.</title>
        <authorList>
            <person name="Minami H."/>
            <person name="Dubouzet E."/>
            <person name="Iwasa K."/>
            <person name="Sato F."/>
        </authorList>
    </citation>
    <scope>NUCLEOTIDE SEQUENCE [MRNA]</scope>
    <scope>FUNCTION</scope>
    <scope>SUBUNIT</scope>
    <scope>INHIBITION BY O-PHENANTHROLINE</scope>
    <source>
        <strain>cv. dissecta</strain>
    </source>
</reference>
<dbReference type="EC" id="3.5.99.14" evidence="2"/>
<dbReference type="EMBL" id="AB267398">
    <property type="protein sequence ID" value="BAF45337.1"/>
    <property type="molecule type" value="mRNA"/>
</dbReference>
<dbReference type="SMR" id="A2A1A0"/>
<dbReference type="PRO" id="PR:A2A1A0"/>
<dbReference type="GO" id="GO:0050474">
    <property type="term" value="F:(S)-norcoclaurine synthase activity"/>
    <property type="evidence" value="ECO:0007669"/>
    <property type="project" value="RHEA"/>
</dbReference>
<dbReference type="GO" id="GO:0046872">
    <property type="term" value="F:metal ion binding"/>
    <property type="evidence" value="ECO:0007669"/>
    <property type="project" value="UniProtKB-KW"/>
</dbReference>
<dbReference type="GO" id="GO:0016491">
    <property type="term" value="F:oxidoreductase activity"/>
    <property type="evidence" value="ECO:0007669"/>
    <property type="project" value="UniProtKB-KW"/>
</dbReference>
<dbReference type="GO" id="GO:0009820">
    <property type="term" value="P:alkaloid metabolic process"/>
    <property type="evidence" value="ECO:0007669"/>
    <property type="project" value="UniProtKB-KW"/>
</dbReference>
<dbReference type="FunFam" id="2.60.120.330:FF:000001">
    <property type="entry name" value="Protein SRG1"/>
    <property type="match status" value="1"/>
</dbReference>
<dbReference type="Gene3D" id="2.60.120.330">
    <property type="entry name" value="B-lactam Antibiotic, Isopenicillin N Synthase, Chain"/>
    <property type="match status" value="1"/>
</dbReference>
<dbReference type="InterPro" id="IPR026992">
    <property type="entry name" value="DIOX_N"/>
</dbReference>
<dbReference type="InterPro" id="IPR044861">
    <property type="entry name" value="IPNS-like_FE2OG_OXY"/>
</dbReference>
<dbReference type="InterPro" id="IPR027443">
    <property type="entry name" value="IPNS-like_sf"/>
</dbReference>
<dbReference type="InterPro" id="IPR005123">
    <property type="entry name" value="Oxoglu/Fe-dep_dioxygenase_dom"/>
</dbReference>
<dbReference type="InterPro" id="IPR050295">
    <property type="entry name" value="Plant_2OG-oxidoreductases"/>
</dbReference>
<dbReference type="PANTHER" id="PTHR47991">
    <property type="entry name" value="OXOGLUTARATE/IRON-DEPENDENT DIOXYGENASE"/>
    <property type="match status" value="1"/>
</dbReference>
<dbReference type="Pfam" id="PF03171">
    <property type="entry name" value="2OG-FeII_Oxy"/>
    <property type="match status" value="1"/>
</dbReference>
<dbReference type="Pfam" id="PF14226">
    <property type="entry name" value="DIOX_N"/>
    <property type="match status" value="1"/>
</dbReference>
<dbReference type="SUPFAM" id="SSF51197">
    <property type="entry name" value="Clavaminate synthase-like"/>
    <property type="match status" value="1"/>
</dbReference>
<dbReference type="PROSITE" id="PS51471">
    <property type="entry name" value="FE2OG_OXY"/>
    <property type="match status" value="1"/>
</dbReference>
<accession>A2A1A0</accession>
<proteinExistence type="evidence at protein level"/>
<feature type="chain" id="PRO_0000358939" description="S-norcoclaurine synthase 1">
    <location>
        <begin position="1"/>
        <end position="352"/>
    </location>
</feature>
<feature type="domain" description="Fe2OG dioxygenase" evidence="3">
    <location>
        <begin position="200"/>
        <end position="304"/>
    </location>
</feature>
<feature type="binding site" evidence="3">
    <location>
        <position position="228"/>
    </location>
    <ligand>
        <name>Fe cation</name>
        <dbReference type="ChEBI" id="CHEBI:24875"/>
    </ligand>
</feature>
<feature type="binding site" evidence="3">
    <location>
        <position position="230"/>
    </location>
    <ligand>
        <name>Fe cation</name>
        <dbReference type="ChEBI" id="CHEBI:24875"/>
    </ligand>
</feature>
<feature type="binding site" evidence="3">
    <location>
        <position position="285"/>
    </location>
    <ligand>
        <name>Fe cation</name>
        <dbReference type="ChEBI" id="CHEBI:24875"/>
    </ligand>
</feature>
<name>NCS1_COPJA</name>
<gene>
    <name type="primary">NCS1</name>
</gene>
<protein>
    <recommendedName>
        <fullName>S-norcoclaurine synthase 1</fullName>
        <shortName>CjNCS1</shortName>
        <ecNumber evidence="2">3.5.99.14</ecNumber>
    </recommendedName>
</protein>
<comment type="function">
    <text evidence="4">Involved in the biosynthesis of the common precursor of all benzylisoquinoline alkaloids such as morphine, sanguinarine, codeine or berberine. Condenses dopamine and phenylacetaldehyde, 3,4-dihydrophenylacetaldehyde or 4-hydroxyphenylacetaldehyde.</text>
</comment>
<comment type="catalytic activity">
    <reaction evidence="2">
        <text>(4-hydroxyphenyl)acetaldehyde + dopamine = (S)-norcoclaurine + H2O</text>
        <dbReference type="Rhea" id="RHEA:16173"/>
        <dbReference type="ChEBI" id="CHEBI:15377"/>
        <dbReference type="ChEBI" id="CHEBI:15621"/>
        <dbReference type="ChEBI" id="CHEBI:58253"/>
        <dbReference type="ChEBI" id="CHEBI:59905"/>
        <dbReference type="EC" id="3.5.99.14"/>
    </reaction>
</comment>
<comment type="cofactor">
    <cofactor evidence="1">
        <name>Fe cation</name>
        <dbReference type="ChEBI" id="CHEBI:24875"/>
    </cofactor>
    <text evidence="1">Binds 1 Fe cation per subunit.</text>
</comment>
<comment type="activity regulation">
    <text>Inhibited by O-phenanthroline, but not by EDTA.</text>
</comment>
<comment type="subunit">
    <text evidence="4">Monomer.</text>
</comment>
<comment type="miscellaneous">
    <text>NCS1 is a 2-oxoglutarate-independent dioxygenase-like protein that catalyzed the cyclase reaction without oxygen.</text>
</comment>
<comment type="similarity">
    <text evidence="5">Belongs to the iron/ascorbate-dependent oxidoreductase family.</text>
</comment>
<sequence>MSKNLTGVGGSLPVENVQVLAGKELKNLPNRYVRPELEHDDVVPIDNSLEIPVIDLSRLLDQQYACDELAKFHSACLDWGFFQLINHGVREEVIEKMKVDTEDFFRLPFKEKNAYRQLPNGMEGYGQAFVTSEEQKLDWADMHFLITKPVQERNMRFWPTSPTSFRETMEKYSMELQKVAMCLTGMMAKNLGLESEILTKPLRTVFNREDELLPSMSSCGEGLGLSPHSDATGLTLLIQVNEVNGLHIKKDEKWVPIKPILGAFVVNIGDVIEIMSNGIYKSIEHRAVINTDKERLSIAAFHDPEYGTKIGPLPDLVKENGVKYKTIDYEDYLIRSSNIKLDGKSLLDQMKL</sequence>
<organism>
    <name type="scientific">Coptis japonica</name>
    <name type="common">Japanese goldthread</name>
    <dbReference type="NCBI Taxonomy" id="3442"/>
    <lineage>
        <taxon>Eukaryota</taxon>
        <taxon>Viridiplantae</taxon>
        <taxon>Streptophyta</taxon>
        <taxon>Embryophyta</taxon>
        <taxon>Tracheophyta</taxon>
        <taxon>Spermatophyta</taxon>
        <taxon>Magnoliopsida</taxon>
        <taxon>Ranunculales</taxon>
        <taxon>Ranunculaceae</taxon>
        <taxon>Coptidoideae</taxon>
        <taxon>Coptis</taxon>
    </lineage>
</organism>
<keyword id="KW-0017">Alkaloid metabolism</keyword>
<keyword id="KW-0378">Hydrolase</keyword>
<keyword id="KW-0408">Iron</keyword>
<keyword id="KW-0479">Metal-binding</keyword>
<keyword id="KW-0560">Oxidoreductase</keyword>